<proteinExistence type="evidence at protein level"/>
<dbReference type="EC" id="3.6.5.2" evidence="4"/>
<dbReference type="EMBL" id="BT021522">
    <property type="protein sequence ID" value="AAX46369.1"/>
    <property type="molecule type" value="mRNA"/>
</dbReference>
<dbReference type="EMBL" id="BC109840">
    <property type="protein sequence ID" value="AAI09841.1"/>
    <property type="molecule type" value="mRNA"/>
</dbReference>
<dbReference type="RefSeq" id="NP_001019711.1">
    <property type="nucleotide sequence ID" value="NM_001024540.1"/>
</dbReference>
<dbReference type="SMR" id="Q58DS5"/>
<dbReference type="FunCoup" id="Q58DS5">
    <property type="interactions" value="1015"/>
</dbReference>
<dbReference type="STRING" id="9913.ENSBTAP00000023407"/>
<dbReference type="PaxDb" id="9913-ENSBTAP00000023407"/>
<dbReference type="GeneID" id="514541"/>
<dbReference type="KEGG" id="bta:514541"/>
<dbReference type="CTD" id="5872"/>
<dbReference type="eggNOG" id="KOG0078">
    <property type="taxonomic scope" value="Eukaryota"/>
</dbReference>
<dbReference type="HOGENOM" id="CLU_041217_23_1_1"/>
<dbReference type="InParanoid" id="Q58DS5"/>
<dbReference type="OrthoDB" id="9989112at2759"/>
<dbReference type="TreeFam" id="TF314097"/>
<dbReference type="Proteomes" id="UP000009136">
    <property type="component" value="Unplaced"/>
</dbReference>
<dbReference type="GO" id="GO:0005923">
    <property type="term" value="C:bicellular tight junction"/>
    <property type="evidence" value="ECO:0000250"/>
    <property type="project" value="UniProtKB"/>
</dbReference>
<dbReference type="GO" id="GO:0031410">
    <property type="term" value="C:cytoplasmic vesicle"/>
    <property type="evidence" value="ECO:0000250"/>
    <property type="project" value="UniProtKB"/>
</dbReference>
<dbReference type="GO" id="GO:0030139">
    <property type="term" value="C:endocytic vesicle"/>
    <property type="evidence" value="ECO:0000250"/>
    <property type="project" value="UniProtKB"/>
</dbReference>
<dbReference type="GO" id="GO:0005768">
    <property type="term" value="C:endosome"/>
    <property type="evidence" value="ECO:0000318"/>
    <property type="project" value="GO_Central"/>
</dbReference>
<dbReference type="GO" id="GO:0032593">
    <property type="term" value="C:insulin-responsive compartment"/>
    <property type="evidence" value="ECO:0000250"/>
    <property type="project" value="UniProtKB"/>
</dbReference>
<dbReference type="GO" id="GO:0030027">
    <property type="term" value="C:lamellipodium"/>
    <property type="evidence" value="ECO:0000250"/>
    <property type="project" value="UniProtKB"/>
</dbReference>
<dbReference type="GO" id="GO:0016328">
    <property type="term" value="C:lateral plasma membrane"/>
    <property type="evidence" value="ECO:0000250"/>
    <property type="project" value="UniProtKB"/>
</dbReference>
<dbReference type="GO" id="GO:0043005">
    <property type="term" value="C:neuron projection"/>
    <property type="evidence" value="ECO:0000250"/>
    <property type="project" value="UniProtKB"/>
</dbReference>
<dbReference type="GO" id="GO:0005886">
    <property type="term" value="C:plasma membrane"/>
    <property type="evidence" value="ECO:0000250"/>
    <property type="project" value="UniProtKB"/>
</dbReference>
<dbReference type="GO" id="GO:0055037">
    <property type="term" value="C:recycling endosome"/>
    <property type="evidence" value="ECO:0000250"/>
    <property type="project" value="UniProtKB"/>
</dbReference>
<dbReference type="GO" id="GO:0055038">
    <property type="term" value="C:recycling endosome membrane"/>
    <property type="evidence" value="ECO:0007669"/>
    <property type="project" value="UniProtKB-SubCell"/>
</dbReference>
<dbReference type="GO" id="GO:0008021">
    <property type="term" value="C:synaptic vesicle"/>
    <property type="evidence" value="ECO:0000318"/>
    <property type="project" value="GO_Central"/>
</dbReference>
<dbReference type="GO" id="GO:0005802">
    <property type="term" value="C:trans-Golgi network"/>
    <property type="evidence" value="ECO:0000250"/>
    <property type="project" value="UniProtKB"/>
</dbReference>
<dbReference type="GO" id="GO:0030140">
    <property type="term" value="C:trans-Golgi network transport vesicle"/>
    <property type="evidence" value="ECO:0000318"/>
    <property type="project" value="GO_Central"/>
</dbReference>
<dbReference type="GO" id="GO:0005525">
    <property type="term" value="F:GTP binding"/>
    <property type="evidence" value="ECO:0000250"/>
    <property type="project" value="UniProtKB"/>
</dbReference>
<dbReference type="GO" id="GO:0003924">
    <property type="term" value="F:GTPase activity"/>
    <property type="evidence" value="ECO:0000318"/>
    <property type="project" value="GO_Central"/>
</dbReference>
<dbReference type="GO" id="GO:0070830">
    <property type="term" value="P:bicellular tight junction assembly"/>
    <property type="evidence" value="ECO:0000250"/>
    <property type="project" value="UniProtKB"/>
</dbReference>
<dbReference type="GO" id="GO:0032869">
    <property type="term" value="P:cellular response to insulin stimulus"/>
    <property type="evidence" value="ECO:0000250"/>
    <property type="project" value="UniProtKB"/>
</dbReference>
<dbReference type="GO" id="GO:0030866">
    <property type="term" value="P:cortical actin cytoskeleton organization"/>
    <property type="evidence" value="ECO:0000250"/>
    <property type="project" value="UniProtKB"/>
</dbReference>
<dbReference type="GO" id="GO:0032456">
    <property type="term" value="P:endocytic recycling"/>
    <property type="evidence" value="ECO:0000250"/>
    <property type="project" value="UniProtKB"/>
</dbReference>
<dbReference type="GO" id="GO:0016197">
    <property type="term" value="P:endosomal transport"/>
    <property type="evidence" value="ECO:0000250"/>
    <property type="project" value="UniProtKB"/>
</dbReference>
<dbReference type="GO" id="GO:0035767">
    <property type="term" value="P:endothelial cell chemotaxis"/>
    <property type="evidence" value="ECO:0000250"/>
    <property type="project" value="UniProtKB"/>
</dbReference>
<dbReference type="GO" id="GO:0097368">
    <property type="term" value="P:establishment of Sertoli cell barrier"/>
    <property type="evidence" value="ECO:0000250"/>
    <property type="project" value="UniProtKB"/>
</dbReference>
<dbReference type="GO" id="GO:0006887">
    <property type="term" value="P:exocytosis"/>
    <property type="evidence" value="ECO:0000318"/>
    <property type="project" value="GO_Central"/>
</dbReference>
<dbReference type="GO" id="GO:0031175">
    <property type="term" value="P:neuron projection development"/>
    <property type="evidence" value="ECO:0000250"/>
    <property type="project" value="UniProtKB"/>
</dbReference>
<dbReference type="GO" id="GO:0010737">
    <property type="term" value="P:protein kinase A signaling"/>
    <property type="evidence" value="ECO:0000250"/>
    <property type="project" value="UniProtKB"/>
</dbReference>
<dbReference type="GO" id="GO:1902463">
    <property type="term" value="P:protein localization to cell leading edge"/>
    <property type="evidence" value="ECO:0000250"/>
    <property type="project" value="UniProtKB"/>
</dbReference>
<dbReference type="GO" id="GO:0072659">
    <property type="term" value="P:protein localization to plasma membrane"/>
    <property type="evidence" value="ECO:0000250"/>
    <property type="project" value="UniProtKB"/>
</dbReference>
<dbReference type="GO" id="GO:0015031">
    <property type="term" value="P:protein transport"/>
    <property type="evidence" value="ECO:0007669"/>
    <property type="project" value="UniProtKB-KW"/>
</dbReference>
<dbReference type="GO" id="GO:0044795">
    <property type="term" value="P:trans-Golgi network to recycling endosome transport"/>
    <property type="evidence" value="ECO:0000250"/>
    <property type="project" value="UniProtKB"/>
</dbReference>
<dbReference type="CDD" id="cd01867">
    <property type="entry name" value="Rab8_Rab10_Rab13_like"/>
    <property type="match status" value="1"/>
</dbReference>
<dbReference type="FunFam" id="3.40.50.300:FF:000363">
    <property type="entry name" value="Secretion related GTPase srgA"/>
    <property type="match status" value="1"/>
</dbReference>
<dbReference type="Gene3D" id="3.40.50.300">
    <property type="entry name" value="P-loop containing nucleotide triphosphate hydrolases"/>
    <property type="match status" value="1"/>
</dbReference>
<dbReference type="InterPro" id="IPR027417">
    <property type="entry name" value="P-loop_NTPase"/>
</dbReference>
<dbReference type="InterPro" id="IPR005225">
    <property type="entry name" value="Small_GTP-bd"/>
</dbReference>
<dbReference type="InterPro" id="IPR001806">
    <property type="entry name" value="Small_GTPase"/>
</dbReference>
<dbReference type="InterPro" id="IPR050305">
    <property type="entry name" value="Small_GTPase_Rab"/>
</dbReference>
<dbReference type="NCBIfam" id="TIGR00231">
    <property type="entry name" value="small_GTP"/>
    <property type="match status" value="1"/>
</dbReference>
<dbReference type="PANTHER" id="PTHR47980">
    <property type="entry name" value="LD44762P"/>
    <property type="match status" value="1"/>
</dbReference>
<dbReference type="Pfam" id="PF00071">
    <property type="entry name" value="Ras"/>
    <property type="match status" value="1"/>
</dbReference>
<dbReference type="PRINTS" id="PR00449">
    <property type="entry name" value="RASTRNSFRMNG"/>
</dbReference>
<dbReference type="SMART" id="SM00177">
    <property type="entry name" value="ARF"/>
    <property type="match status" value="1"/>
</dbReference>
<dbReference type="SMART" id="SM00175">
    <property type="entry name" value="RAB"/>
    <property type="match status" value="1"/>
</dbReference>
<dbReference type="SMART" id="SM00176">
    <property type="entry name" value="RAN"/>
    <property type="match status" value="1"/>
</dbReference>
<dbReference type="SMART" id="SM00173">
    <property type="entry name" value="RAS"/>
    <property type="match status" value="1"/>
</dbReference>
<dbReference type="SMART" id="SM00174">
    <property type="entry name" value="RHO"/>
    <property type="match status" value="1"/>
</dbReference>
<dbReference type="SUPFAM" id="SSF52540">
    <property type="entry name" value="P-loop containing nucleoside triphosphate hydrolases"/>
    <property type="match status" value="1"/>
</dbReference>
<dbReference type="PROSITE" id="PS51419">
    <property type="entry name" value="RAB"/>
    <property type="match status" value="1"/>
</dbReference>
<evidence type="ECO:0000250" key="1">
    <source>
        <dbReference type="UniProtKB" id="P35286"/>
    </source>
</evidence>
<evidence type="ECO:0000250" key="2">
    <source>
        <dbReference type="UniProtKB" id="P51153"/>
    </source>
</evidence>
<evidence type="ECO:0000250" key="3">
    <source>
        <dbReference type="UniProtKB" id="P62820"/>
    </source>
</evidence>
<evidence type="ECO:0000250" key="4">
    <source>
        <dbReference type="UniProtKB" id="Q9DD03"/>
    </source>
</evidence>
<evidence type="ECO:0000255" key="5"/>
<evidence type="ECO:0000269" key="6">
    <source>
    </source>
</evidence>
<evidence type="ECO:0000305" key="7"/>
<feature type="chain" id="PRO_0000226292" description="Ras-related protein Rab-13">
    <location>
        <begin position="1"/>
        <end position="200"/>
    </location>
</feature>
<feature type="propeptide" id="PRO_0000370755" description="Removed in mature form" evidence="5">
    <location>
        <begin position="201"/>
        <end position="203"/>
    </location>
</feature>
<feature type="short sequence motif" description="Switch 1" evidence="3">
    <location>
        <begin position="31"/>
        <end position="45"/>
    </location>
</feature>
<feature type="short sequence motif" description="Switch 2" evidence="3">
    <location>
        <begin position="63"/>
        <end position="80"/>
    </location>
</feature>
<feature type="binding site" evidence="3">
    <location>
        <position position="17"/>
    </location>
    <ligand>
        <name>GTP</name>
        <dbReference type="ChEBI" id="CHEBI:37565"/>
    </ligand>
</feature>
<feature type="binding site" evidence="3">
    <location>
        <position position="18"/>
    </location>
    <ligand>
        <name>GTP</name>
        <dbReference type="ChEBI" id="CHEBI:37565"/>
    </ligand>
</feature>
<feature type="binding site" evidence="3">
    <location>
        <position position="20"/>
    </location>
    <ligand>
        <name>GTP</name>
        <dbReference type="ChEBI" id="CHEBI:37565"/>
    </ligand>
</feature>
<feature type="binding site" evidence="3">
    <location>
        <position position="21"/>
    </location>
    <ligand>
        <name>GTP</name>
        <dbReference type="ChEBI" id="CHEBI:37565"/>
    </ligand>
</feature>
<feature type="binding site" evidence="3">
    <location>
        <position position="22"/>
    </location>
    <ligand>
        <name>GTP</name>
        <dbReference type="ChEBI" id="CHEBI:37565"/>
    </ligand>
</feature>
<feature type="binding site" evidence="3">
    <location>
        <position position="22"/>
    </location>
    <ligand>
        <name>Mg(2+)</name>
        <dbReference type="ChEBI" id="CHEBI:18420"/>
    </ligand>
</feature>
<feature type="binding site" evidence="3">
    <location>
        <position position="23"/>
    </location>
    <ligand>
        <name>GTP</name>
        <dbReference type="ChEBI" id="CHEBI:37565"/>
    </ligand>
</feature>
<feature type="binding site" evidence="3">
    <location>
        <position position="40"/>
    </location>
    <ligand>
        <name>GTP</name>
        <dbReference type="ChEBI" id="CHEBI:37565"/>
    </ligand>
</feature>
<feature type="binding site" evidence="3">
    <location>
        <position position="40"/>
    </location>
    <ligand>
        <name>Mg(2+)</name>
        <dbReference type="ChEBI" id="CHEBI:18420"/>
    </ligand>
</feature>
<feature type="binding site" evidence="3">
    <location>
        <position position="63"/>
    </location>
    <ligand>
        <name>Mg(2+)</name>
        <dbReference type="ChEBI" id="CHEBI:18420"/>
    </ligand>
</feature>
<feature type="binding site" evidence="3">
    <location>
        <position position="66"/>
    </location>
    <ligand>
        <name>GTP</name>
        <dbReference type="ChEBI" id="CHEBI:37565"/>
    </ligand>
</feature>
<feature type="binding site" evidence="3">
    <location>
        <position position="121"/>
    </location>
    <ligand>
        <name>GTP</name>
        <dbReference type="ChEBI" id="CHEBI:37565"/>
    </ligand>
</feature>
<feature type="binding site" evidence="3">
    <location>
        <position position="122"/>
    </location>
    <ligand>
        <name>GTP</name>
        <dbReference type="ChEBI" id="CHEBI:37565"/>
    </ligand>
</feature>
<feature type="binding site" evidence="3">
    <location>
        <position position="124"/>
    </location>
    <ligand>
        <name>GTP</name>
        <dbReference type="ChEBI" id="CHEBI:37565"/>
    </ligand>
</feature>
<feature type="binding site" evidence="3">
    <location>
        <position position="152"/>
    </location>
    <ligand>
        <name>GTP</name>
        <dbReference type="ChEBI" id="CHEBI:37565"/>
    </ligand>
</feature>
<feature type="binding site" evidence="3">
    <location>
        <position position="153"/>
    </location>
    <ligand>
        <name>GTP</name>
        <dbReference type="ChEBI" id="CHEBI:37565"/>
    </ligand>
</feature>
<feature type="modified residue" description="Cysteine methyl ester" evidence="5">
    <location>
        <position position="200"/>
    </location>
</feature>
<feature type="lipid moiety-binding region" description="S-geranylgeranyl cysteine" evidence="2">
    <location>
        <position position="200"/>
    </location>
</feature>
<feature type="cross-link" description="Glycyl lysine isopeptide (Lys-Gly) (interchain with G-Cter in ubiquitin)" evidence="2">
    <location>
        <position position="58"/>
    </location>
</feature>
<feature type="sequence conflict" description="In Ref. 2; AAI09841." evidence="7" ref="2">
    <original>R</original>
    <variation>K</variation>
    <location>
        <position position="46"/>
    </location>
</feature>
<organism>
    <name type="scientific">Bos taurus</name>
    <name type="common">Bovine</name>
    <dbReference type="NCBI Taxonomy" id="9913"/>
    <lineage>
        <taxon>Eukaryota</taxon>
        <taxon>Metazoa</taxon>
        <taxon>Chordata</taxon>
        <taxon>Craniata</taxon>
        <taxon>Vertebrata</taxon>
        <taxon>Euteleostomi</taxon>
        <taxon>Mammalia</taxon>
        <taxon>Eutheria</taxon>
        <taxon>Laurasiatheria</taxon>
        <taxon>Artiodactyla</taxon>
        <taxon>Ruminantia</taxon>
        <taxon>Pecora</taxon>
        <taxon>Bovidae</taxon>
        <taxon>Bovinae</taxon>
        <taxon>Bos</taxon>
    </lineage>
</organism>
<accession>Q58DS5</accession>
<accession>Q32KZ4</accession>
<keyword id="KW-0965">Cell junction</keyword>
<keyword id="KW-1003">Cell membrane</keyword>
<keyword id="KW-0966">Cell projection</keyword>
<keyword id="KW-0968">Cytoplasmic vesicle</keyword>
<keyword id="KW-0967">Endosome</keyword>
<keyword id="KW-0333">Golgi apparatus</keyword>
<keyword id="KW-0342">GTP-binding</keyword>
<keyword id="KW-0378">Hydrolase</keyword>
<keyword id="KW-1017">Isopeptide bond</keyword>
<keyword id="KW-0449">Lipoprotein</keyword>
<keyword id="KW-0460">Magnesium</keyword>
<keyword id="KW-0472">Membrane</keyword>
<keyword id="KW-0479">Metal-binding</keyword>
<keyword id="KW-0488">Methylation</keyword>
<keyword id="KW-0547">Nucleotide-binding</keyword>
<keyword id="KW-0636">Prenylation</keyword>
<keyword id="KW-0653">Protein transport</keyword>
<keyword id="KW-1185">Reference proteome</keyword>
<keyword id="KW-0796">Tight junction</keyword>
<keyword id="KW-0813">Transport</keyword>
<keyword id="KW-0832">Ubl conjugation</keyword>
<protein>
    <recommendedName>
        <fullName>Ras-related protein Rab-13</fullName>
        <ecNumber evidence="4">3.6.5.2</ecNumber>
    </recommendedName>
</protein>
<reference key="1">
    <citation type="journal article" date="2005" name="BMC Genomics">
        <title>Characterization of 954 bovine full-CDS cDNA sequences.</title>
        <authorList>
            <person name="Harhay G.P."/>
            <person name="Sonstegard T.S."/>
            <person name="Keele J.W."/>
            <person name="Heaton M.P."/>
            <person name="Clawson M.L."/>
            <person name="Snelling W.M."/>
            <person name="Wiedmann R.T."/>
            <person name="Van Tassell C.P."/>
            <person name="Smith T.P.L."/>
        </authorList>
    </citation>
    <scope>NUCLEOTIDE SEQUENCE [LARGE SCALE MRNA]</scope>
</reference>
<reference key="2">
    <citation type="submission" date="2005-11" db="EMBL/GenBank/DDBJ databases">
        <authorList>
            <consortium name="NIH - Mammalian Gene Collection (MGC) project"/>
        </authorList>
    </citation>
    <scope>NUCLEOTIDE SEQUENCE [LARGE SCALE MRNA]</scope>
    <source>
        <strain>Crossbred X Angus</strain>
        <tissue>Liver</tissue>
    </source>
</reference>
<reference key="3">
    <citation type="journal article" date="2004" name="J. Cell Biol.">
        <title>Rab13 regulates PKA signaling during tight junction assembly.</title>
        <authorList>
            <person name="Koehler K."/>
            <person name="Louvard D."/>
            <person name="Zahraoui A."/>
        </authorList>
    </citation>
    <scope>INTERACTION WITH PRKACA</scope>
</reference>
<comment type="function">
    <text evidence="2">The small GTPases Rab are key regulators of intracellular membrane trafficking, from the formation of transport vesicles to their fusion with membranes. Rabs cycle between an inactive GDP-bound form and an active GTP-bound form that is able to recruit to membranes different sets of downstream effectors directly responsible for vesicle formation, movement, tethering and fusion. RAB13 is involved in endocytic recycling and regulates the transport to the plasma membrane of transmembrane proteins like the tight junction protein OCLN/occludin. Thereby, it regulates the assembly and the activity of tight junctions. Moreover, it may also regulate tight junction assembly by activating the PKA signaling pathway and by reorganizing the actin cytoskeleton through the activation of the downstream effectors PRKACA and MICALL2 respectively. Through its role in tight junction assembly, may play a role in the establishment of Sertoli cell barrier. Plays also a role in angiogenesis through regulation of endothelial cells chemotaxis. Also involved in neurite outgrowth. Has also been proposed to play a role in post-Golgi membrane trafficking from the TGN to the recycling endosome. Finally, it has been involved in insulin-induced transport to the plasma membrane of the glucose transporter GLUT4 and therefore may play a role in glucose homeostasis (By similarity).</text>
</comment>
<comment type="catalytic activity">
    <reaction evidence="2">
        <text>GTP + H2O = GDP + phosphate + H(+)</text>
        <dbReference type="Rhea" id="RHEA:19669"/>
        <dbReference type="ChEBI" id="CHEBI:15377"/>
        <dbReference type="ChEBI" id="CHEBI:15378"/>
        <dbReference type="ChEBI" id="CHEBI:37565"/>
        <dbReference type="ChEBI" id="CHEBI:43474"/>
        <dbReference type="ChEBI" id="CHEBI:58189"/>
        <dbReference type="EC" id="3.6.5.2"/>
    </reaction>
    <physiologicalReaction direction="left-to-right" evidence="2">
        <dbReference type="Rhea" id="RHEA:19670"/>
    </physiologicalReaction>
</comment>
<comment type="cofactor">
    <cofactor evidence="3">
        <name>Mg(2+)</name>
        <dbReference type="ChEBI" id="CHEBI:18420"/>
    </cofactor>
</comment>
<comment type="activity regulation">
    <text evidence="1 2">Regulated by guanine nucleotide exchange factors (GEFs) including DENND1C, which promote the exchange of bound GDP for free GTP. Regulated by GTPase activating proteins (GAPs) which increase the GTP hydrolysis activity. Inhibited by GDP dissociation inhibitors (GDIs) (By similarity). Activated in response to insulin (By similarity).</text>
</comment>
<comment type="subunit">
    <text evidence="2 6">Interacts (GTP-bound form) with MICALL2; competes with RAB8A and is involved in tight junctions assembly. Interacts (GTP-bound form) with MICALL1. Interacts (GTP-bound form) with MICAL1, MICAL3, MICALCL, EHBP1 and EHBP1L1; ternary complexes of RAB8A, RAB13 and either MICAL1 or EHBP1L1 are possible. Interacts with PRKACA; downstream effector of RAB13 involved in tight junction assembly. Interacts with GRB2; may recruit RAB13 to the leading edge of migrating endothelial cells where it can activate RHOA. Interacts (isoprenylated form) with PDE6D; dissociates RAB13 from membranes. Interacts with BICDL2/BICDR2. Interacts with LEPROT and LEPROTL1.</text>
</comment>
<comment type="subcellular location">
    <subcellularLocation>
        <location evidence="2">Cell membrane</location>
        <topology evidence="7">Lipid-anchor</topology>
        <orientation evidence="7">Cytoplasmic side</orientation>
    </subcellularLocation>
    <subcellularLocation>
        <location evidence="2">Cytoplasmic vesicle membrane</location>
        <topology evidence="7">Lipid-anchor</topology>
        <orientation evidence="7">Cytoplasmic side</orientation>
    </subcellularLocation>
    <subcellularLocation>
        <location evidence="2">Cell junction</location>
        <location evidence="2">Tight junction</location>
    </subcellularLocation>
    <subcellularLocation>
        <location evidence="2">Golgi apparatus</location>
        <location evidence="2">trans-Golgi network membrane</location>
    </subcellularLocation>
    <subcellularLocation>
        <location evidence="2">Recycling endosome membrane</location>
    </subcellularLocation>
    <subcellularLocation>
        <location evidence="4">Cell projection</location>
        <location evidence="4">Lamellipodium</location>
    </subcellularLocation>
    <text evidence="2 4">Tight junctions or associated with vesicles scattered throughout the cytoplasm in cells lacking tight junctions (By similarity). Relocalizes to the leading edge of lamellipodia in migrating endothelial cells (By similarity).</text>
</comment>
<comment type="domain">
    <text evidence="3">Switch 1, switch 2 and the interswitch regions are characteristic of Rab GTPases and mediate the interactions with Rab downstream effectors. The switch regions undergo conformational changes upon nucleotide binding which drive interaction with specific sets of effector proteins, with most effectors only binding to GTP-bound Rab.</text>
</comment>
<comment type="PTM">
    <text evidence="2">Ubiquitinated via 'Lys-11'-linked ubiquitination on Lys-58; impairing the recruitment of guanosine diphosphate (GDP) dissociation inhibitor 1/GDI1.</text>
</comment>
<comment type="similarity">
    <text evidence="7">Belongs to the small GTPase superfamily. Rab family.</text>
</comment>
<gene>
    <name type="primary">RAB13</name>
</gene>
<sequence length="203" mass="22970">MAKAYDHLFKLLLIGDSGVGKTCLIIRFAEDNFNNTYISTIGIDFRIRTVDIEGKKIKLQVWDTAGQERFKTITTAYYRGAMGIILVYDITDEKSFENIQNWMKSIKENASAGVERLLLGNKCDMEAKRKVQKEQADKLAREHGIRFFETSAKSSMNVDEAFSSLARDILLKSGGRRLKNNNKPPSTDLKTCDKKNTNKCSLA</sequence>
<name>RAB13_BOVIN</name>